<evidence type="ECO:0000303" key="1">
    <source>
    </source>
</evidence>
<keyword id="KW-1185">Reference proteome</keyword>
<reference key="1">
    <citation type="journal article" date="1989" name="EMBO J.">
        <title>Characterization of the L11, L1, L10 and L12 equivalent ribosomal protein gene cluster of the halophilic archaebacterium Halobacterium cutirubrum.</title>
        <authorList>
            <person name="Shimmin L.C."/>
            <person name="Dennis P.P."/>
        </authorList>
    </citation>
    <scope>NUCLEOTIDE SEQUENCE [GENOMIC DNA]</scope>
    <source>
        <strain>ATCC 33170 / DSM 669 / NCCB 81095 / NRC 34001</strain>
    </source>
</reference>
<reference key="2">
    <citation type="journal article" date="2000" name="Proc. Natl. Acad. Sci. U.S.A.">
        <title>Genome sequence of Halobacterium species NRC-1.</title>
        <authorList>
            <person name="Ng W.V."/>
            <person name="Kennedy S.P."/>
            <person name="Mahairas G.G."/>
            <person name="Berquist B."/>
            <person name="Pan M."/>
            <person name="Shukla H.D."/>
            <person name="Lasky S.R."/>
            <person name="Baliga N.S."/>
            <person name="Thorsson V."/>
            <person name="Sbrogna J."/>
            <person name="Swartzell S."/>
            <person name="Weir D."/>
            <person name="Hall J."/>
            <person name="Dahl T.A."/>
            <person name="Welti R."/>
            <person name="Goo Y.A."/>
            <person name="Leithauser B."/>
            <person name="Keller K."/>
            <person name="Cruz R."/>
            <person name="Danson M.J."/>
            <person name="Hough D.W."/>
            <person name="Maddocks D.G."/>
            <person name="Jablonski P.E."/>
            <person name="Krebs M.P."/>
            <person name="Angevine C.M."/>
            <person name="Dale H."/>
            <person name="Isenbarger T.A."/>
            <person name="Peck R.F."/>
            <person name="Pohlschroder M."/>
            <person name="Spudich J.L."/>
            <person name="Jung K.-H."/>
            <person name="Alam M."/>
            <person name="Freitas T."/>
            <person name="Hou S."/>
            <person name="Daniels C.J."/>
            <person name="Dennis P.P."/>
            <person name="Omer A.D."/>
            <person name="Ebhardt H."/>
            <person name="Lowe T.M."/>
            <person name="Liang P."/>
            <person name="Riley M."/>
            <person name="Hood L."/>
            <person name="DasSarma S."/>
        </authorList>
    </citation>
    <scope>NUCLEOTIDE SEQUENCE [LARGE SCALE GENOMIC DNA]</scope>
    <source>
        <strain>ATCC 700922 / JCM 11081 / NRC-1</strain>
    </source>
</reference>
<gene>
    <name type="ordered locus">VNG_1110C</name>
</gene>
<protein>
    <recommendedName>
        <fullName>Protein VNG_1110C</fullName>
    </recommendedName>
    <alternativeName>
        <fullName evidence="1">Protein NAB</fullName>
    </alternativeName>
</protein>
<accession>P17104</accession>
<accession>Q9HQL1</accession>
<name>Y1110_HALSA</name>
<sequence length="68" mass="7539">MGDPAAYRDSTQIVLPVGTLEDIEVDLEAEFMVSVFRPTDAEIVRIIGSPVVIKEVTEFLTRHGVHMP</sequence>
<organism>
    <name type="scientific">Halobacterium salinarum (strain ATCC 700922 / JCM 11081 / NRC-1)</name>
    <name type="common">Halobacterium halobium</name>
    <dbReference type="NCBI Taxonomy" id="64091"/>
    <lineage>
        <taxon>Archaea</taxon>
        <taxon>Methanobacteriati</taxon>
        <taxon>Methanobacteriota</taxon>
        <taxon>Stenosarchaea group</taxon>
        <taxon>Halobacteria</taxon>
        <taxon>Halobacteriales</taxon>
        <taxon>Halobacteriaceae</taxon>
        <taxon>Halobacterium</taxon>
        <taxon>Halobacterium salinarum NRC-34001</taxon>
    </lineage>
</organism>
<proteinExistence type="predicted"/>
<dbReference type="EMBL" id="X15078">
    <property type="protein sequence ID" value="CAA33177.1"/>
    <property type="molecule type" value="Genomic_DNA"/>
</dbReference>
<dbReference type="EMBL" id="AE004437">
    <property type="protein sequence ID" value="AAG19502.1"/>
    <property type="molecule type" value="Genomic_DNA"/>
</dbReference>
<dbReference type="PIR" id="B84267">
    <property type="entry name" value="B84267"/>
</dbReference>
<dbReference type="PIR" id="S04117">
    <property type="entry name" value="QQHSNB"/>
</dbReference>
<dbReference type="RefSeq" id="WP_010902797.1">
    <property type="nucleotide sequence ID" value="NC_002607.1"/>
</dbReference>
<dbReference type="STRING" id="64091.VNG_1110C"/>
<dbReference type="PaxDb" id="64091-VNG_1110C"/>
<dbReference type="KEGG" id="hal:VNG_1110C"/>
<dbReference type="PATRIC" id="fig|64091.14.peg.848"/>
<dbReference type="HOGENOM" id="CLU_2802370_0_0_2"/>
<dbReference type="InParanoid" id="P17104"/>
<dbReference type="OrthoDB" id="268322at2157"/>
<dbReference type="Proteomes" id="UP000000554">
    <property type="component" value="Chromosome"/>
</dbReference>
<dbReference type="InterPro" id="IPR056231">
    <property type="entry name" value="VNG_1110C-like"/>
</dbReference>
<dbReference type="Pfam" id="PF24397">
    <property type="entry name" value="VNG_1110C"/>
    <property type="match status" value="1"/>
</dbReference>
<feature type="chain" id="PRO_0000066060" description="Protein VNG_1110C">
    <location>
        <begin position="1"/>
        <end position="68"/>
    </location>
</feature>